<protein>
    <recommendedName>
        <fullName evidence="1">Elongation factor 4</fullName>
        <shortName evidence="1">EF-4</shortName>
        <ecNumber evidence="1">3.6.5.n1</ecNumber>
    </recommendedName>
    <alternativeName>
        <fullName evidence="1">Ribosomal back-translocase LepA</fullName>
    </alternativeName>
</protein>
<dbReference type="EC" id="3.6.5.n1" evidence="1"/>
<dbReference type="EMBL" id="CP000114">
    <property type="protein sequence ID" value="ABA46057.1"/>
    <property type="molecule type" value="Genomic_DNA"/>
</dbReference>
<dbReference type="RefSeq" id="WP_001019133.1">
    <property type="nucleotide sequence ID" value="NC_007432.1"/>
</dbReference>
<dbReference type="SMR" id="Q3K1F9"/>
<dbReference type="KEGG" id="sak:SAK_1022"/>
<dbReference type="HOGENOM" id="CLU_009995_3_3_9"/>
<dbReference type="GO" id="GO:0005886">
    <property type="term" value="C:plasma membrane"/>
    <property type="evidence" value="ECO:0007669"/>
    <property type="project" value="UniProtKB-SubCell"/>
</dbReference>
<dbReference type="GO" id="GO:0005525">
    <property type="term" value="F:GTP binding"/>
    <property type="evidence" value="ECO:0007669"/>
    <property type="project" value="UniProtKB-UniRule"/>
</dbReference>
<dbReference type="GO" id="GO:0003924">
    <property type="term" value="F:GTPase activity"/>
    <property type="evidence" value="ECO:0007669"/>
    <property type="project" value="UniProtKB-UniRule"/>
</dbReference>
<dbReference type="GO" id="GO:0043022">
    <property type="term" value="F:ribosome binding"/>
    <property type="evidence" value="ECO:0007669"/>
    <property type="project" value="UniProtKB-UniRule"/>
</dbReference>
<dbReference type="GO" id="GO:0003746">
    <property type="term" value="F:translation elongation factor activity"/>
    <property type="evidence" value="ECO:0007669"/>
    <property type="project" value="UniProtKB-UniRule"/>
</dbReference>
<dbReference type="GO" id="GO:0045727">
    <property type="term" value="P:positive regulation of translation"/>
    <property type="evidence" value="ECO:0007669"/>
    <property type="project" value="UniProtKB-UniRule"/>
</dbReference>
<dbReference type="CDD" id="cd03699">
    <property type="entry name" value="EF4_II"/>
    <property type="match status" value="1"/>
</dbReference>
<dbReference type="CDD" id="cd16260">
    <property type="entry name" value="EF4_III"/>
    <property type="match status" value="1"/>
</dbReference>
<dbReference type="CDD" id="cd01890">
    <property type="entry name" value="LepA"/>
    <property type="match status" value="1"/>
</dbReference>
<dbReference type="CDD" id="cd03709">
    <property type="entry name" value="lepA_C"/>
    <property type="match status" value="1"/>
</dbReference>
<dbReference type="FunFam" id="3.40.50.300:FF:000078">
    <property type="entry name" value="Elongation factor 4"/>
    <property type="match status" value="1"/>
</dbReference>
<dbReference type="FunFam" id="2.40.30.10:FF:000015">
    <property type="entry name" value="Translation factor GUF1, mitochondrial"/>
    <property type="match status" value="1"/>
</dbReference>
<dbReference type="FunFam" id="3.30.70.240:FF:000007">
    <property type="entry name" value="Translation factor GUF1, mitochondrial"/>
    <property type="match status" value="1"/>
</dbReference>
<dbReference type="FunFam" id="3.30.70.2570:FF:000001">
    <property type="entry name" value="Translation factor GUF1, mitochondrial"/>
    <property type="match status" value="1"/>
</dbReference>
<dbReference type="FunFam" id="3.30.70.870:FF:000004">
    <property type="entry name" value="Translation factor GUF1, mitochondrial"/>
    <property type="match status" value="1"/>
</dbReference>
<dbReference type="Gene3D" id="3.30.70.240">
    <property type="match status" value="1"/>
</dbReference>
<dbReference type="Gene3D" id="3.30.70.2570">
    <property type="entry name" value="Elongation factor 4, C-terminal domain"/>
    <property type="match status" value="1"/>
</dbReference>
<dbReference type="Gene3D" id="3.30.70.870">
    <property type="entry name" value="Elongation Factor G (Translational Gtpase), domain 3"/>
    <property type="match status" value="1"/>
</dbReference>
<dbReference type="Gene3D" id="3.40.50.300">
    <property type="entry name" value="P-loop containing nucleotide triphosphate hydrolases"/>
    <property type="match status" value="1"/>
</dbReference>
<dbReference type="Gene3D" id="2.40.30.10">
    <property type="entry name" value="Translation factors"/>
    <property type="match status" value="1"/>
</dbReference>
<dbReference type="HAMAP" id="MF_00071">
    <property type="entry name" value="LepA"/>
    <property type="match status" value="1"/>
</dbReference>
<dbReference type="InterPro" id="IPR006297">
    <property type="entry name" value="EF-4"/>
</dbReference>
<dbReference type="InterPro" id="IPR035647">
    <property type="entry name" value="EFG_III/V"/>
</dbReference>
<dbReference type="InterPro" id="IPR000640">
    <property type="entry name" value="EFG_V-like"/>
</dbReference>
<dbReference type="InterPro" id="IPR004161">
    <property type="entry name" value="EFTu-like_2"/>
</dbReference>
<dbReference type="InterPro" id="IPR031157">
    <property type="entry name" value="G_TR_CS"/>
</dbReference>
<dbReference type="InterPro" id="IPR038363">
    <property type="entry name" value="LepA_C_sf"/>
</dbReference>
<dbReference type="InterPro" id="IPR013842">
    <property type="entry name" value="LepA_CTD"/>
</dbReference>
<dbReference type="InterPro" id="IPR035654">
    <property type="entry name" value="LepA_IV"/>
</dbReference>
<dbReference type="InterPro" id="IPR027417">
    <property type="entry name" value="P-loop_NTPase"/>
</dbReference>
<dbReference type="InterPro" id="IPR005225">
    <property type="entry name" value="Small_GTP-bd"/>
</dbReference>
<dbReference type="InterPro" id="IPR000795">
    <property type="entry name" value="T_Tr_GTP-bd_dom"/>
</dbReference>
<dbReference type="NCBIfam" id="TIGR01393">
    <property type="entry name" value="lepA"/>
    <property type="match status" value="1"/>
</dbReference>
<dbReference type="NCBIfam" id="TIGR00231">
    <property type="entry name" value="small_GTP"/>
    <property type="match status" value="1"/>
</dbReference>
<dbReference type="PANTHER" id="PTHR43512:SF4">
    <property type="entry name" value="TRANSLATION FACTOR GUF1 HOMOLOG, CHLOROPLASTIC"/>
    <property type="match status" value="1"/>
</dbReference>
<dbReference type="PANTHER" id="PTHR43512">
    <property type="entry name" value="TRANSLATION FACTOR GUF1-RELATED"/>
    <property type="match status" value="1"/>
</dbReference>
<dbReference type="Pfam" id="PF00679">
    <property type="entry name" value="EFG_C"/>
    <property type="match status" value="1"/>
</dbReference>
<dbReference type="Pfam" id="PF00009">
    <property type="entry name" value="GTP_EFTU"/>
    <property type="match status" value="1"/>
</dbReference>
<dbReference type="Pfam" id="PF03144">
    <property type="entry name" value="GTP_EFTU_D2"/>
    <property type="match status" value="1"/>
</dbReference>
<dbReference type="Pfam" id="PF06421">
    <property type="entry name" value="LepA_C"/>
    <property type="match status" value="1"/>
</dbReference>
<dbReference type="PRINTS" id="PR00315">
    <property type="entry name" value="ELONGATNFCT"/>
</dbReference>
<dbReference type="SMART" id="SM00838">
    <property type="entry name" value="EFG_C"/>
    <property type="match status" value="1"/>
</dbReference>
<dbReference type="SUPFAM" id="SSF54980">
    <property type="entry name" value="EF-G C-terminal domain-like"/>
    <property type="match status" value="2"/>
</dbReference>
<dbReference type="SUPFAM" id="SSF52540">
    <property type="entry name" value="P-loop containing nucleoside triphosphate hydrolases"/>
    <property type="match status" value="1"/>
</dbReference>
<dbReference type="PROSITE" id="PS00301">
    <property type="entry name" value="G_TR_1"/>
    <property type="match status" value="1"/>
</dbReference>
<dbReference type="PROSITE" id="PS51722">
    <property type="entry name" value="G_TR_2"/>
    <property type="match status" value="1"/>
</dbReference>
<reference key="1">
    <citation type="journal article" date="2005" name="Proc. Natl. Acad. Sci. U.S.A.">
        <title>Genome analysis of multiple pathogenic isolates of Streptococcus agalactiae: implications for the microbial 'pan-genome'.</title>
        <authorList>
            <person name="Tettelin H."/>
            <person name="Masignani V."/>
            <person name="Cieslewicz M.J."/>
            <person name="Donati C."/>
            <person name="Medini D."/>
            <person name="Ward N.L."/>
            <person name="Angiuoli S.V."/>
            <person name="Crabtree J."/>
            <person name="Jones A.L."/>
            <person name="Durkin A.S."/>
            <person name="DeBoy R.T."/>
            <person name="Davidsen T.M."/>
            <person name="Mora M."/>
            <person name="Scarselli M."/>
            <person name="Margarit y Ros I."/>
            <person name="Peterson J.D."/>
            <person name="Hauser C.R."/>
            <person name="Sundaram J.P."/>
            <person name="Nelson W.C."/>
            <person name="Madupu R."/>
            <person name="Brinkac L.M."/>
            <person name="Dodson R.J."/>
            <person name="Rosovitz M.J."/>
            <person name="Sullivan S.A."/>
            <person name="Daugherty S.C."/>
            <person name="Haft D.H."/>
            <person name="Selengut J."/>
            <person name="Gwinn M.L."/>
            <person name="Zhou L."/>
            <person name="Zafar N."/>
            <person name="Khouri H."/>
            <person name="Radune D."/>
            <person name="Dimitrov G."/>
            <person name="Watkins K."/>
            <person name="O'Connor K.J."/>
            <person name="Smith S."/>
            <person name="Utterback T.R."/>
            <person name="White O."/>
            <person name="Rubens C.E."/>
            <person name="Grandi G."/>
            <person name="Madoff L.C."/>
            <person name="Kasper D.L."/>
            <person name="Telford J.L."/>
            <person name="Wessels M.R."/>
            <person name="Rappuoli R."/>
            <person name="Fraser C.M."/>
        </authorList>
    </citation>
    <scope>NUCLEOTIDE SEQUENCE [LARGE SCALE GENOMIC DNA]</scope>
    <source>
        <strain>ATCC 27591 / A909 / CDC SS700</strain>
    </source>
</reference>
<sequence>MNIEDLKKRQEKIRNFSIIAHIDHGKSTLADRILEKTETVSSREMQAQLLDSMDLERERGITIKLNAIELNYTAKDGETYIFHLIDTPGHVDFTYEVSRSLAACEGAILVVDAAQGIEAQTLANVYLALDNDLEILPVINKIDLPAADPERVRAEVEDVIGLDASEAVLASAKAGIGIEEILEQIVEKVPAPTGEVDAPLQALIFDSVYDAYRGVILQVRIVNGMVKPGDKIQMMSNGKTFDVTEVGIFTPKAVGRDFLATGDVGYIAASIKTVADTRVGDTITLANNPAIEPLHGYKQMNPMVFAGLYPIESNKYNDLREALEKLQLNDASLQFEPETSQALGFGFRCGFLGLLHMDVIQERLEREFNIDLIMTAPSVVYHVNTTDGEMLEVSNPSEFPDPTRVDSIEEPYVKAQIMVPQEFVGAVMELAQRKRGDFVTMDYIDDNRVNVIYQIPLAEIVFDFFDKLKSSTRGYASFDYEISEYRRSQLVKMDILLNGDKVDALSFIVHKEFAYERGKLIVDKLKKIIPRQQFEVPIQAAIGQKIVARSDIKALRKNVLAKCYGGDVSRKRKLLEKQKAGKKRMKAIGSVEVPQEAFLSVLSMDDDDKK</sequence>
<gene>
    <name evidence="1" type="primary">lepA</name>
    <name type="ordered locus">SAK_1022</name>
</gene>
<name>LEPA_STRA1</name>
<feature type="chain" id="PRO_0000224800" description="Elongation factor 4">
    <location>
        <begin position="1"/>
        <end position="610"/>
    </location>
</feature>
<feature type="domain" description="tr-type G">
    <location>
        <begin position="11"/>
        <end position="193"/>
    </location>
</feature>
<feature type="binding site" evidence="1">
    <location>
        <begin position="23"/>
        <end position="28"/>
    </location>
    <ligand>
        <name>GTP</name>
        <dbReference type="ChEBI" id="CHEBI:37565"/>
    </ligand>
</feature>
<feature type="binding site" evidence="1">
    <location>
        <begin position="140"/>
        <end position="143"/>
    </location>
    <ligand>
        <name>GTP</name>
        <dbReference type="ChEBI" id="CHEBI:37565"/>
    </ligand>
</feature>
<keyword id="KW-1003">Cell membrane</keyword>
<keyword id="KW-0342">GTP-binding</keyword>
<keyword id="KW-0378">Hydrolase</keyword>
<keyword id="KW-0472">Membrane</keyword>
<keyword id="KW-0547">Nucleotide-binding</keyword>
<keyword id="KW-0648">Protein biosynthesis</keyword>
<accession>Q3K1F9</accession>
<evidence type="ECO:0000255" key="1">
    <source>
        <dbReference type="HAMAP-Rule" id="MF_00071"/>
    </source>
</evidence>
<organism>
    <name type="scientific">Streptococcus agalactiae serotype Ia (strain ATCC 27591 / A909 / CDC SS700)</name>
    <dbReference type="NCBI Taxonomy" id="205921"/>
    <lineage>
        <taxon>Bacteria</taxon>
        <taxon>Bacillati</taxon>
        <taxon>Bacillota</taxon>
        <taxon>Bacilli</taxon>
        <taxon>Lactobacillales</taxon>
        <taxon>Streptococcaceae</taxon>
        <taxon>Streptococcus</taxon>
    </lineage>
</organism>
<comment type="function">
    <text evidence="1">Required for accurate and efficient protein synthesis under certain stress conditions. May act as a fidelity factor of the translation reaction, by catalyzing a one-codon backward translocation of tRNAs on improperly translocated ribosomes. Back-translocation proceeds from a post-translocation (POST) complex to a pre-translocation (PRE) complex, thus giving elongation factor G a second chance to translocate the tRNAs correctly. Binds to ribosomes in a GTP-dependent manner.</text>
</comment>
<comment type="catalytic activity">
    <reaction evidence="1">
        <text>GTP + H2O = GDP + phosphate + H(+)</text>
        <dbReference type="Rhea" id="RHEA:19669"/>
        <dbReference type="ChEBI" id="CHEBI:15377"/>
        <dbReference type="ChEBI" id="CHEBI:15378"/>
        <dbReference type="ChEBI" id="CHEBI:37565"/>
        <dbReference type="ChEBI" id="CHEBI:43474"/>
        <dbReference type="ChEBI" id="CHEBI:58189"/>
        <dbReference type="EC" id="3.6.5.n1"/>
    </reaction>
</comment>
<comment type="subcellular location">
    <subcellularLocation>
        <location evidence="1">Cell membrane</location>
        <topology evidence="1">Peripheral membrane protein</topology>
        <orientation evidence="1">Cytoplasmic side</orientation>
    </subcellularLocation>
</comment>
<comment type="similarity">
    <text evidence="1">Belongs to the TRAFAC class translation factor GTPase superfamily. Classic translation factor GTPase family. LepA subfamily.</text>
</comment>
<proteinExistence type="inferred from homology"/>